<proteinExistence type="inferred from homology"/>
<accession>A4W8W0</accession>
<gene>
    <name evidence="1" type="primary">rlmL</name>
    <name type="ordered locus">Ent638_1460</name>
</gene>
<sequence>MNSLFASTARGLEELLKTELESLGARECQVVQGGVHFEGDTRLIYQSLMWSRLASRIMLPLGACKVYSDLDLYLGVQATDWTEIFAPGATFAVHFSGLNDEIRNSQYGALKVKDAIVDSFTRKNLERPNVDRENPDLRINVWLNKETAHISLDLCGEGLHQRGYRDRAGIAPIKENLAAAIVMRSGWQPGTPLLDPMCGSGTLLIEAAMMATDRAPGLHRGQWGFNGWAQHDDAIWKEVKAEAQVRARKGLADYGSRFYGSDSDARVIERAASNARRAGIGELISFEVKDVAQLTNPLPKGPYGTVISNPPYGERLDSEPALIALHSLLGRSMKDYFGGWNLSLFSGSPELLSCLQLRAERQFKAKNGPLDCVQKNYHLTEKEGDSKPSTVAEDYANRLRKNLKKFEKWAKQEGIECYRLYDADLPEYNVAVDRYADWIVVQEYAAPKTIDAQKARQRLLDIIAATIGVLGIAPNKLVLKTRERQKGTNQYQKMSDKGDFIEVGEYNARLWVNLTDYLDTGLFLDHRIARRMLGQMSKGKDFLNLFAYTGSASVHAGLGGARSTTTMDMSRTYLEWAERNLRLNGLTGRQHRLLQADVLGWLRDTDEQFDLIFIDPPTFSNSKRMEDTFDVQRDHIRLMSDLKRLLRKGGTIMFSNNKRGFRMDNDGLAALGLKAQEISQKTLSQDFARNRQIHNCWLITAV</sequence>
<keyword id="KW-0963">Cytoplasm</keyword>
<keyword id="KW-0489">Methyltransferase</keyword>
<keyword id="KW-0694">RNA-binding</keyword>
<keyword id="KW-0698">rRNA processing</keyword>
<keyword id="KW-0949">S-adenosyl-L-methionine</keyword>
<keyword id="KW-0808">Transferase</keyword>
<dbReference type="EC" id="2.1.1.173" evidence="1"/>
<dbReference type="EC" id="2.1.1.264" evidence="1"/>
<dbReference type="EMBL" id="CP000653">
    <property type="protein sequence ID" value="ABP60140.1"/>
    <property type="molecule type" value="Genomic_DNA"/>
</dbReference>
<dbReference type="RefSeq" id="WP_012016857.1">
    <property type="nucleotide sequence ID" value="NC_009436.1"/>
</dbReference>
<dbReference type="SMR" id="A4W8W0"/>
<dbReference type="STRING" id="399742.Ent638_1460"/>
<dbReference type="KEGG" id="ent:Ent638_1460"/>
<dbReference type="eggNOG" id="COG0116">
    <property type="taxonomic scope" value="Bacteria"/>
</dbReference>
<dbReference type="eggNOG" id="COG1092">
    <property type="taxonomic scope" value="Bacteria"/>
</dbReference>
<dbReference type="HOGENOM" id="CLU_014042_2_0_6"/>
<dbReference type="OrthoDB" id="9809404at2"/>
<dbReference type="Proteomes" id="UP000000230">
    <property type="component" value="Chromosome"/>
</dbReference>
<dbReference type="GO" id="GO:0005737">
    <property type="term" value="C:cytoplasm"/>
    <property type="evidence" value="ECO:0007669"/>
    <property type="project" value="UniProtKB-SubCell"/>
</dbReference>
<dbReference type="GO" id="GO:0052915">
    <property type="term" value="F:23S rRNA (guanine(2445)-N(2))-methyltransferase activity"/>
    <property type="evidence" value="ECO:0007669"/>
    <property type="project" value="UniProtKB-UniRule"/>
</dbReference>
<dbReference type="GO" id="GO:0003723">
    <property type="term" value="F:RNA binding"/>
    <property type="evidence" value="ECO:0007669"/>
    <property type="project" value="UniProtKB-KW"/>
</dbReference>
<dbReference type="GO" id="GO:0070043">
    <property type="term" value="F:rRNA (guanine-N7-)-methyltransferase activity"/>
    <property type="evidence" value="ECO:0007669"/>
    <property type="project" value="UniProtKB-UniRule"/>
</dbReference>
<dbReference type="CDD" id="cd02440">
    <property type="entry name" value="AdoMet_MTases"/>
    <property type="match status" value="1"/>
</dbReference>
<dbReference type="CDD" id="cd11715">
    <property type="entry name" value="THUMP_AdoMetMT"/>
    <property type="match status" value="1"/>
</dbReference>
<dbReference type="FunFam" id="3.30.2130.30:FF:000001">
    <property type="entry name" value="Ribosomal RNA large subunit methyltransferase K/L"/>
    <property type="match status" value="1"/>
</dbReference>
<dbReference type="FunFam" id="3.30.750.80:FF:000001">
    <property type="entry name" value="Ribosomal RNA large subunit methyltransferase K/L"/>
    <property type="match status" value="1"/>
</dbReference>
<dbReference type="FunFam" id="3.40.50.150:FF:000039">
    <property type="entry name" value="Ribosomal RNA large subunit methyltransferase K/L"/>
    <property type="match status" value="1"/>
</dbReference>
<dbReference type="Gene3D" id="3.30.2130.30">
    <property type="match status" value="1"/>
</dbReference>
<dbReference type="Gene3D" id="3.30.750.80">
    <property type="entry name" value="RNA methyltransferase domain (HRMD) like"/>
    <property type="match status" value="1"/>
</dbReference>
<dbReference type="Gene3D" id="3.40.50.150">
    <property type="entry name" value="Vaccinia Virus protein VP39"/>
    <property type="match status" value="2"/>
</dbReference>
<dbReference type="HAMAP" id="MF_01858">
    <property type="entry name" value="23SrRNA_methyltr_KL"/>
    <property type="match status" value="1"/>
</dbReference>
<dbReference type="InterPro" id="IPR017244">
    <property type="entry name" value="23SrRNA_methyltr_KL"/>
</dbReference>
<dbReference type="InterPro" id="IPR002052">
    <property type="entry name" value="DNA_methylase_N6_adenine_CS"/>
</dbReference>
<dbReference type="InterPro" id="IPR000241">
    <property type="entry name" value="RlmKL-like_Mtase"/>
</dbReference>
<dbReference type="InterPro" id="IPR053943">
    <property type="entry name" value="RlmKL-like_Mtase_CS"/>
</dbReference>
<dbReference type="InterPro" id="IPR054170">
    <property type="entry name" value="RlmL_1st"/>
</dbReference>
<dbReference type="InterPro" id="IPR019614">
    <property type="entry name" value="SAM-dep_methyl-trfase"/>
</dbReference>
<dbReference type="InterPro" id="IPR029063">
    <property type="entry name" value="SAM-dependent_MTases_sf"/>
</dbReference>
<dbReference type="InterPro" id="IPR004114">
    <property type="entry name" value="THUMP_dom"/>
</dbReference>
<dbReference type="NCBIfam" id="NF008748">
    <property type="entry name" value="PRK11783.1"/>
    <property type="match status" value="1"/>
</dbReference>
<dbReference type="PANTHER" id="PTHR47313">
    <property type="entry name" value="RIBOSOMAL RNA LARGE SUBUNIT METHYLTRANSFERASE K/L"/>
    <property type="match status" value="1"/>
</dbReference>
<dbReference type="PANTHER" id="PTHR47313:SF1">
    <property type="entry name" value="RIBOSOMAL RNA LARGE SUBUNIT METHYLTRANSFERASE K_L"/>
    <property type="match status" value="1"/>
</dbReference>
<dbReference type="Pfam" id="PF10672">
    <property type="entry name" value="Methyltrans_SAM"/>
    <property type="match status" value="1"/>
</dbReference>
<dbReference type="Pfam" id="PF22020">
    <property type="entry name" value="RlmL_1st"/>
    <property type="match status" value="1"/>
</dbReference>
<dbReference type="Pfam" id="PF02926">
    <property type="entry name" value="THUMP"/>
    <property type="match status" value="1"/>
</dbReference>
<dbReference type="Pfam" id="PF01170">
    <property type="entry name" value="UPF0020"/>
    <property type="match status" value="1"/>
</dbReference>
<dbReference type="PIRSF" id="PIRSF037618">
    <property type="entry name" value="RNA_Mtase_bacteria_prd"/>
    <property type="match status" value="1"/>
</dbReference>
<dbReference type="PRINTS" id="PR00507">
    <property type="entry name" value="N12N6MTFRASE"/>
</dbReference>
<dbReference type="SMART" id="SM00981">
    <property type="entry name" value="THUMP"/>
    <property type="match status" value="1"/>
</dbReference>
<dbReference type="SUPFAM" id="SSF53335">
    <property type="entry name" value="S-adenosyl-L-methionine-dependent methyltransferases"/>
    <property type="match status" value="2"/>
</dbReference>
<dbReference type="PROSITE" id="PS51165">
    <property type="entry name" value="THUMP"/>
    <property type="match status" value="1"/>
</dbReference>
<dbReference type="PROSITE" id="PS01261">
    <property type="entry name" value="UPF0020"/>
    <property type="match status" value="1"/>
</dbReference>
<reference key="1">
    <citation type="journal article" date="2010" name="PLoS Genet.">
        <title>Genome sequence of the plant growth promoting endophytic bacterium Enterobacter sp. 638.</title>
        <authorList>
            <person name="Taghavi S."/>
            <person name="van der Lelie D."/>
            <person name="Hoffman A."/>
            <person name="Zhang Y.B."/>
            <person name="Walla M.D."/>
            <person name="Vangronsveld J."/>
            <person name="Newman L."/>
            <person name="Monchy S."/>
        </authorList>
    </citation>
    <scope>NUCLEOTIDE SEQUENCE [LARGE SCALE GENOMIC DNA]</scope>
    <source>
        <strain>638</strain>
    </source>
</reference>
<evidence type="ECO:0000255" key="1">
    <source>
        <dbReference type="HAMAP-Rule" id="MF_01858"/>
    </source>
</evidence>
<comment type="function">
    <text evidence="1">Specifically methylates the guanine in position 2445 (m2G2445) and the guanine in position 2069 (m7G2069) of 23S rRNA.</text>
</comment>
<comment type="catalytic activity">
    <reaction evidence="1">
        <text>guanosine(2445) in 23S rRNA + S-adenosyl-L-methionine = N(2)-methylguanosine(2445) in 23S rRNA + S-adenosyl-L-homocysteine + H(+)</text>
        <dbReference type="Rhea" id="RHEA:42740"/>
        <dbReference type="Rhea" id="RHEA-COMP:10215"/>
        <dbReference type="Rhea" id="RHEA-COMP:10216"/>
        <dbReference type="ChEBI" id="CHEBI:15378"/>
        <dbReference type="ChEBI" id="CHEBI:57856"/>
        <dbReference type="ChEBI" id="CHEBI:59789"/>
        <dbReference type="ChEBI" id="CHEBI:74269"/>
        <dbReference type="ChEBI" id="CHEBI:74481"/>
        <dbReference type="EC" id="2.1.1.173"/>
    </reaction>
</comment>
<comment type="catalytic activity">
    <reaction evidence="1">
        <text>guanosine(2069) in 23S rRNA + S-adenosyl-L-methionine = N(2)-methylguanosine(2069) in 23S rRNA + S-adenosyl-L-homocysteine + H(+)</text>
        <dbReference type="Rhea" id="RHEA:43772"/>
        <dbReference type="Rhea" id="RHEA-COMP:10688"/>
        <dbReference type="Rhea" id="RHEA-COMP:10689"/>
        <dbReference type="ChEBI" id="CHEBI:15378"/>
        <dbReference type="ChEBI" id="CHEBI:57856"/>
        <dbReference type="ChEBI" id="CHEBI:59789"/>
        <dbReference type="ChEBI" id="CHEBI:74269"/>
        <dbReference type="ChEBI" id="CHEBI:74481"/>
        <dbReference type="EC" id="2.1.1.264"/>
    </reaction>
</comment>
<comment type="subcellular location">
    <subcellularLocation>
        <location evidence="1">Cytoplasm</location>
    </subcellularLocation>
</comment>
<comment type="similarity">
    <text evidence="1">Belongs to the methyltransferase superfamily. RlmKL family.</text>
</comment>
<feature type="chain" id="PRO_0000366736" description="Ribosomal RNA large subunit methyltransferase K/L">
    <location>
        <begin position="1"/>
        <end position="702"/>
    </location>
</feature>
<feature type="domain" description="THUMP" evidence="1">
    <location>
        <begin position="43"/>
        <end position="154"/>
    </location>
</feature>
<name>RLMKL_ENT38</name>
<organism>
    <name type="scientific">Enterobacter sp. (strain 638)</name>
    <dbReference type="NCBI Taxonomy" id="399742"/>
    <lineage>
        <taxon>Bacteria</taxon>
        <taxon>Pseudomonadati</taxon>
        <taxon>Pseudomonadota</taxon>
        <taxon>Gammaproteobacteria</taxon>
        <taxon>Enterobacterales</taxon>
        <taxon>Enterobacteriaceae</taxon>
        <taxon>Enterobacter</taxon>
    </lineage>
</organism>
<protein>
    <recommendedName>
        <fullName evidence="1">Ribosomal RNA large subunit methyltransferase K/L</fullName>
    </recommendedName>
    <domain>
        <recommendedName>
            <fullName evidence="1">23S rRNA m2G2445 methyltransferase</fullName>
            <ecNumber evidence="1">2.1.1.173</ecNumber>
        </recommendedName>
        <alternativeName>
            <fullName evidence="1">rRNA (guanine-N(2)-)-methyltransferase RlmL</fullName>
        </alternativeName>
    </domain>
    <domain>
        <recommendedName>
            <fullName evidence="1">23S rRNA m7G2069 methyltransferase</fullName>
            <ecNumber evidence="1">2.1.1.264</ecNumber>
        </recommendedName>
        <alternativeName>
            <fullName evidence="1">rRNA (guanine-N(7)-)-methyltransferase RlmK</fullName>
        </alternativeName>
    </domain>
</protein>